<proteinExistence type="inferred from homology"/>
<accession>Q5QZ35</accession>
<sequence length="198" mass="21816">MTLPLILGSGSKYRREILDRLHLNYDVVKPDIDESAISSESPQQLVGRLAEAKARAVEKRMTYDNAIIIGSDQVAVCDGNILGKPGNRENAVRQLSSFIGKTVTFYTGLAVFNTEAQQCEVRVEPFEVEFRQLTAEEIERYVELENPFDCAGSFKSEGLGISLFSGLKGNDPNTLIGLPAIALLDMLRTHGINPLNKD</sequence>
<dbReference type="EC" id="3.6.1.-" evidence="1"/>
<dbReference type="EMBL" id="AE017340">
    <property type="protein sequence ID" value="AAV82186.1"/>
    <property type="molecule type" value="Genomic_DNA"/>
</dbReference>
<dbReference type="RefSeq" id="WP_011234592.1">
    <property type="nucleotide sequence ID" value="NC_006512.1"/>
</dbReference>
<dbReference type="SMR" id="Q5QZ35"/>
<dbReference type="STRING" id="283942.IL1346"/>
<dbReference type="GeneID" id="41336522"/>
<dbReference type="KEGG" id="ilo:IL1346"/>
<dbReference type="eggNOG" id="COG0424">
    <property type="taxonomic scope" value="Bacteria"/>
</dbReference>
<dbReference type="HOGENOM" id="CLU_040416_1_0_6"/>
<dbReference type="OrthoDB" id="9813694at2"/>
<dbReference type="Proteomes" id="UP000001171">
    <property type="component" value="Chromosome"/>
</dbReference>
<dbReference type="GO" id="GO:0005737">
    <property type="term" value="C:cytoplasm"/>
    <property type="evidence" value="ECO:0007669"/>
    <property type="project" value="UniProtKB-SubCell"/>
</dbReference>
<dbReference type="GO" id="GO:0047429">
    <property type="term" value="F:nucleoside triphosphate diphosphatase activity"/>
    <property type="evidence" value="ECO:0007669"/>
    <property type="project" value="InterPro"/>
</dbReference>
<dbReference type="GO" id="GO:0009117">
    <property type="term" value="P:nucleotide metabolic process"/>
    <property type="evidence" value="ECO:0007669"/>
    <property type="project" value="UniProtKB-KW"/>
</dbReference>
<dbReference type="CDD" id="cd00555">
    <property type="entry name" value="Maf"/>
    <property type="match status" value="1"/>
</dbReference>
<dbReference type="FunFam" id="3.90.950.10:FF:000005">
    <property type="entry name" value="7-methyl-GTP pyrophosphatase"/>
    <property type="match status" value="1"/>
</dbReference>
<dbReference type="Gene3D" id="3.90.950.10">
    <property type="match status" value="1"/>
</dbReference>
<dbReference type="HAMAP" id="MF_00528">
    <property type="entry name" value="Maf"/>
    <property type="match status" value="1"/>
</dbReference>
<dbReference type="InterPro" id="IPR029001">
    <property type="entry name" value="ITPase-like_fam"/>
</dbReference>
<dbReference type="InterPro" id="IPR003697">
    <property type="entry name" value="Maf-like"/>
</dbReference>
<dbReference type="NCBIfam" id="TIGR00172">
    <property type="entry name" value="maf"/>
    <property type="match status" value="1"/>
</dbReference>
<dbReference type="PANTHER" id="PTHR43213:SF10">
    <property type="entry name" value="7-METHYL-GTP PYROPHOSPHATASE"/>
    <property type="match status" value="1"/>
</dbReference>
<dbReference type="PANTHER" id="PTHR43213">
    <property type="entry name" value="BIFUNCTIONAL DTTP/UTP PYROPHOSPHATASE/METHYLTRANSFERASE PROTEIN-RELATED"/>
    <property type="match status" value="1"/>
</dbReference>
<dbReference type="Pfam" id="PF02545">
    <property type="entry name" value="Maf"/>
    <property type="match status" value="1"/>
</dbReference>
<dbReference type="PIRSF" id="PIRSF006305">
    <property type="entry name" value="Maf"/>
    <property type="match status" value="1"/>
</dbReference>
<dbReference type="SUPFAM" id="SSF52972">
    <property type="entry name" value="ITPase-like"/>
    <property type="match status" value="1"/>
</dbReference>
<gene>
    <name type="ordered locus">IL1346</name>
</gene>
<name>NTPPB_IDILO</name>
<comment type="function">
    <text evidence="1">Nucleoside triphosphate pyrophosphatase that hydrolyzes 7-methyl-GTP (m(7)GTP). May have a dual role in cell division arrest and in preventing the incorporation of modified nucleotides into cellular nucleic acids.</text>
</comment>
<comment type="catalytic activity">
    <reaction evidence="1">
        <text>N(7)-methyl-GTP + H2O = N(7)-methyl-GMP + diphosphate + H(+)</text>
        <dbReference type="Rhea" id="RHEA:58744"/>
        <dbReference type="ChEBI" id="CHEBI:15377"/>
        <dbReference type="ChEBI" id="CHEBI:15378"/>
        <dbReference type="ChEBI" id="CHEBI:33019"/>
        <dbReference type="ChEBI" id="CHEBI:58285"/>
        <dbReference type="ChEBI" id="CHEBI:87133"/>
    </reaction>
</comment>
<comment type="cofactor">
    <cofactor evidence="1">
        <name>a divalent metal cation</name>
        <dbReference type="ChEBI" id="CHEBI:60240"/>
    </cofactor>
</comment>
<comment type="subcellular location">
    <subcellularLocation>
        <location evidence="1">Cytoplasm</location>
    </subcellularLocation>
</comment>
<comment type="similarity">
    <text evidence="1">Belongs to the Maf family. YceF subfamily.</text>
</comment>
<evidence type="ECO:0000255" key="1">
    <source>
        <dbReference type="HAMAP-Rule" id="MF_00528"/>
    </source>
</evidence>
<protein>
    <recommendedName>
        <fullName evidence="1">7-methyl-GTP pyrophosphatase</fullName>
        <shortName evidence="1">m(7)GTP pyrophosphatase</shortName>
        <ecNumber evidence="1">3.6.1.-</ecNumber>
    </recommendedName>
</protein>
<reference key="1">
    <citation type="journal article" date="2004" name="Proc. Natl. Acad. Sci. U.S.A.">
        <title>Genome sequence of the deep-sea gamma-proteobacterium Idiomarina loihiensis reveals amino acid fermentation as a source of carbon and energy.</title>
        <authorList>
            <person name="Hou S."/>
            <person name="Saw J.H."/>
            <person name="Lee K.S."/>
            <person name="Freitas T.A."/>
            <person name="Belisle C."/>
            <person name="Kawarabayasi Y."/>
            <person name="Donachie S.P."/>
            <person name="Pikina A."/>
            <person name="Galperin M.Y."/>
            <person name="Koonin E.V."/>
            <person name="Makarova K.S."/>
            <person name="Omelchenko M.V."/>
            <person name="Sorokin A."/>
            <person name="Wolf Y.I."/>
            <person name="Li Q.X."/>
            <person name="Keum Y.S."/>
            <person name="Campbell S."/>
            <person name="Denery J."/>
            <person name="Aizawa S."/>
            <person name="Shibata S."/>
            <person name="Malahoff A."/>
            <person name="Alam M."/>
        </authorList>
    </citation>
    <scope>NUCLEOTIDE SEQUENCE [LARGE SCALE GENOMIC DNA]</scope>
    <source>
        <strain>ATCC BAA-735 / DSM 15497 / L2-TR</strain>
    </source>
</reference>
<keyword id="KW-0963">Cytoplasm</keyword>
<keyword id="KW-0378">Hydrolase</keyword>
<keyword id="KW-0546">Nucleotide metabolism</keyword>
<keyword id="KW-1185">Reference proteome</keyword>
<organism>
    <name type="scientific">Idiomarina loihiensis (strain ATCC BAA-735 / DSM 15497 / L2-TR)</name>
    <dbReference type="NCBI Taxonomy" id="283942"/>
    <lineage>
        <taxon>Bacteria</taxon>
        <taxon>Pseudomonadati</taxon>
        <taxon>Pseudomonadota</taxon>
        <taxon>Gammaproteobacteria</taxon>
        <taxon>Alteromonadales</taxon>
        <taxon>Idiomarinaceae</taxon>
        <taxon>Idiomarina</taxon>
    </lineage>
</organism>
<feature type="chain" id="PRO_0000267324" description="7-methyl-GTP pyrophosphatase">
    <location>
        <begin position="1"/>
        <end position="198"/>
    </location>
</feature>
<feature type="active site" description="Proton acceptor" evidence="1">
    <location>
        <position position="72"/>
    </location>
</feature>
<feature type="site" description="Important for substrate specificity" evidence="1">
    <location>
        <position position="13"/>
    </location>
</feature>
<feature type="site" description="Important for substrate specificity" evidence="1">
    <location>
        <position position="73"/>
    </location>
</feature>
<feature type="site" description="Important for substrate specificity" evidence="1">
    <location>
        <position position="157"/>
    </location>
</feature>